<keyword id="KW-0997">Cell inner membrane</keyword>
<keyword id="KW-1003">Cell membrane</keyword>
<keyword id="KW-0472">Membrane</keyword>
<keyword id="KW-0812">Transmembrane</keyword>
<keyword id="KW-1133">Transmembrane helix</keyword>
<organism>
    <name type="scientific">Brucella ovis (strain ATCC 25840 / 63/290 / NCTC 10512)</name>
    <dbReference type="NCBI Taxonomy" id="444178"/>
    <lineage>
        <taxon>Bacteria</taxon>
        <taxon>Pseudomonadati</taxon>
        <taxon>Pseudomonadota</taxon>
        <taxon>Alphaproteobacteria</taxon>
        <taxon>Hyphomicrobiales</taxon>
        <taxon>Brucellaceae</taxon>
        <taxon>Brucella/Ochrobactrum group</taxon>
        <taxon>Brucella</taxon>
    </lineage>
</organism>
<comment type="subcellular location">
    <subcellularLocation>
        <location evidence="1">Cell inner membrane</location>
        <topology evidence="1">Multi-pass membrane protein</topology>
    </subcellularLocation>
</comment>
<comment type="similarity">
    <text evidence="1">Belongs to the UPF0283 family.</text>
</comment>
<proteinExistence type="inferred from homology"/>
<accession>A5VQH6</accession>
<reference key="1">
    <citation type="journal article" date="2009" name="PLoS ONE">
        <title>Genome degradation in Brucella ovis corresponds with narrowing of its host range and tissue tropism.</title>
        <authorList>
            <person name="Tsolis R.M."/>
            <person name="Seshadri R."/>
            <person name="Santos R.L."/>
            <person name="Sangari F.J."/>
            <person name="Lobo J.M."/>
            <person name="de Jong M.F."/>
            <person name="Ren Q."/>
            <person name="Myers G."/>
            <person name="Brinkac L.M."/>
            <person name="Nelson W.C."/>
            <person name="Deboy R.T."/>
            <person name="Angiuoli S."/>
            <person name="Khouri H."/>
            <person name="Dimitrov G."/>
            <person name="Robinson J.R."/>
            <person name="Mulligan S."/>
            <person name="Walker R.L."/>
            <person name="Elzer P.E."/>
            <person name="Hassan K.A."/>
            <person name="Paulsen I.T."/>
        </authorList>
    </citation>
    <scope>NUCLEOTIDE SEQUENCE [LARGE SCALE GENOMIC DNA]</scope>
    <source>
        <strain>ATCC 25840 / 63/290 / NCTC 10512</strain>
    </source>
</reference>
<gene>
    <name type="ordered locus">BOV_0999</name>
</gene>
<protein>
    <recommendedName>
        <fullName evidence="1">UPF0283 membrane protein BOV_0999</fullName>
    </recommendedName>
</protein>
<sequence length="357" mass="38906">MSDKTPRKPTAFRLEQPARVSAASEQEEPRRPRAVKDLEQITPQADVFDLTDDEAAELEILDPAFEAPERKGWSLSRILFGALGILVSFAIGIWTEDLIRALFVRADWLGWTALGVAMVALAAFAAIILRELVALRRLASVQHLRKDAADAAERDDMAAARKAVDALRTIAAGIPETAKGRQLLDSLTDDIIDGRDLIRLAETEILRPLDREARTLVLNASKRVSIVTAISPRALVDIGYVIFESARLIRRLSQLYGGRPGTLGFIKLARRVIAHLAVTGTIAMGDSVIQQLVGHGLASRLSAKLGEGVVNGLMTARMGIAAMDVVRPFPFNAEKRPGIGDFIGDLARLNSDRNARK</sequence>
<feature type="chain" id="PRO_1000064833" description="UPF0283 membrane protein BOV_0999">
    <location>
        <begin position="1"/>
        <end position="357"/>
    </location>
</feature>
<feature type="transmembrane region" description="Helical" evidence="1">
    <location>
        <begin position="78"/>
        <end position="98"/>
    </location>
</feature>
<feature type="transmembrane region" description="Helical" evidence="1">
    <location>
        <begin position="109"/>
        <end position="129"/>
    </location>
</feature>
<feature type="region of interest" description="Disordered" evidence="2">
    <location>
        <begin position="1"/>
        <end position="36"/>
    </location>
</feature>
<feature type="compositionally biased region" description="Basic and acidic residues" evidence="2">
    <location>
        <begin position="27"/>
        <end position="36"/>
    </location>
</feature>
<dbReference type="EMBL" id="CP000708">
    <property type="protein sequence ID" value="ABQ60141.1"/>
    <property type="molecule type" value="Genomic_DNA"/>
</dbReference>
<dbReference type="RefSeq" id="WP_006012491.1">
    <property type="nucleotide sequence ID" value="NC_009505.1"/>
</dbReference>
<dbReference type="GeneID" id="45124425"/>
<dbReference type="KEGG" id="bov:BOV_0999"/>
<dbReference type="HOGENOM" id="CLU_057693_1_0_5"/>
<dbReference type="Proteomes" id="UP000006383">
    <property type="component" value="Chromosome I"/>
</dbReference>
<dbReference type="GO" id="GO:0005886">
    <property type="term" value="C:plasma membrane"/>
    <property type="evidence" value="ECO:0007669"/>
    <property type="project" value="UniProtKB-SubCell"/>
</dbReference>
<dbReference type="HAMAP" id="MF_01085">
    <property type="entry name" value="UPF0283"/>
    <property type="match status" value="1"/>
</dbReference>
<dbReference type="InterPro" id="IPR021147">
    <property type="entry name" value="DUF697"/>
</dbReference>
<dbReference type="InterPro" id="IPR006507">
    <property type="entry name" value="UPF0283"/>
</dbReference>
<dbReference type="NCBIfam" id="TIGR01620">
    <property type="entry name" value="hyp_HI0043"/>
    <property type="match status" value="1"/>
</dbReference>
<dbReference type="PANTHER" id="PTHR39342">
    <property type="entry name" value="UPF0283 MEMBRANE PROTEIN YCJF"/>
    <property type="match status" value="1"/>
</dbReference>
<dbReference type="PANTHER" id="PTHR39342:SF1">
    <property type="entry name" value="UPF0283 MEMBRANE PROTEIN YCJF"/>
    <property type="match status" value="1"/>
</dbReference>
<dbReference type="Pfam" id="PF05128">
    <property type="entry name" value="DUF697"/>
    <property type="match status" value="1"/>
</dbReference>
<name>Y999_BRUO2</name>
<evidence type="ECO:0000255" key="1">
    <source>
        <dbReference type="HAMAP-Rule" id="MF_01085"/>
    </source>
</evidence>
<evidence type="ECO:0000256" key="2">
    <source>
        <dbReference type="SAM" id="MobiDB-lite"/>
    </source>
</evidence>